<comment type="function">
    <text evidence="2">Actin-binding protein that severs actin filaments.</text>
</comment>
<comment type="subunit">
    <text evidence="2">Interacts with F-actin (PubMed:35281106). Does not interact with G-actin (PubMed:35281106). Interacts with 14-3-3 protein 3 (PubMed:35281106).</text>
</comment>
<comment type="subcellular location">
    <subcellularLocation>
        <location evidence="2">Cytoplasm</location>
    </subcellularLocation>
    <subcellularLocation>
        <location evidence="2">Cytoplasm</location>
        <location evidence="2">Cytoskeleton</location>
    </subcellularLocation>
    <subcellularLocation>
        <location evidence="2">Cell membrane</location>
        <topology evidence="4">Peripheral membrane protein</topology>
        <orientation evidence="2">Cytoplasmic side</orientation>
    </subcellularLocation>
    <subcellularLocation>
        <location evidence="2">Cell projection</location>
        <location evidence="2">Phagocytic cup</location>
    </subcellularLocation>
    <subcellularLocation>
        <location evidence="2">Cell projection</location>
        <location evidence="2">Pseudopodium</location>
    </subcellularLocation>
    <text evidence="2">During phagocytosis, localizes to the tip of the actin-rich phagocytic cup until the closure of the phagocytic cup.</text>
</comment>
<comment type="developmental stage">
    <text evidence="2">Expressed in trophozoites (at protein level).</text>
</comment>
<comment type="similarity">
    <text evidence="4">Belongs to the actin-binding proteins ADF family.</text>
</comment>
<feature type="chain" id="PRO_0000457480" description="Actophorin">
    <location>
        <begin position="1"/>
        <end position="138"/>
    </location>
</feature>
<feature type="domain" description="ADF-H" evidence="1">
    <location>
        <begin position="3"/>
        <end position="134"/>
    </location>
</feature>
<evidence type="ECO:0000255" key="1">
    <source>
        <dbReference type="PROSITE-ProRule" id="PRU00599"/>
    </source>
</evidence>
<evidence type="ECO:0000269" key="2">
    <source>
    </source>
</evidence>
<evidence type="ECO:0000303" key="3">
    <source>
    </source>
</evidence>
<evidence type="ECO:0000305" key="4"/>
<evidence type="ECO:0000312" key="5">
    <source>
        <dbReference type="EMBL" id="BAN38656.1"/>
    </source>
</evidence>
<evidence type="ECO:0000312" key="6">
    <source>
        <dbReference type="EMBL" id="EAL46302.1"/>
    </source>
</evidence>
<protein>
    <recommendedName>
        <fullName evidence="3">Actophorin</fullName>
        <shortName evidence="3">EhActo</shortName>
    </recommendedName>
</protein>
<dbReference type="EMBL" id="AK420026">
    <property type="protein sequence ID" value="BAN38656.1"/>
    <property type="molecule type" value="mRNA"/>
</dbReference>
<dbReference type="EMBL" id="DS571157">
    <property type="protein sequence ID" value="EAL46302.1"/>
    <property type="molecule type" value="Genomic_DNA"/>
</dbReference>
<dbReference type="RefSeq" id="XP_651689.1">
    <property type="nucleotide sequence ID" value="XM_646597.1"/>
</dbReference>
<dbReference type="SMR" id="C4LVG4"/>
<dbReference type="FunCoup" id="C4LVG4">
    <property type="interactions" value="473"/>
</dbReference>
<dbReference type="STRING" id="5759.C4LVG4"/>
<dbReference type="EnsemblProtists" id="GAT92654">
    <property type="protein sequence ID" value="GAT92654"/>
    <property type="gene ID" value="CL6EHI_197480"/>
</dbReference>
<dbReference type="EnsemblProtists" id="rna_EHI_197480-1">
    <property type="protein sequence ID" value="rna_EHI_197480-1"/>
    <property type="gene ID" value="EHI_197480"/>
</dbReference>
<dbReference type="GeneID" id="3406000"/>
<dbReference type="KEGG" id="ehi:EHI_197480"/>
<dbReference type="VEuPathDB" id="AmoebaDB:EHI5A_005680"/>
<dbReference type="VEuPathDB" id="AmoebaDB:EHI7A_018200"/>
<dbReference type="VEuPathDB" id="AmoebaDB:EHI8A_014260"/>
<dbReference type="VEuPathDB" id="AmoebaDB:EHI_197480"/>
<dbReference type="VEuPathDB" id="AmoebaDB:KM1_044700"/>
<dbReference type="eggNOG" id="KOG1735">
    <property type="taxonomic scope" value="Eukaryota"/>
</dbReference>
<dbReference type="HOGENOM" id="CLU_094004_3_2_1"/>
<dbReference type="InParanoid" id="C4LVG4"/>
<dbReference type="OMA" id="WSMIYAT"/>
<dbReference type="OrthoDB" id="25672at2759"/>
<dbReference type="Proteomes" id="UP000001926">
    <property type="component" value="Partially assembled WGS sequence"/>
</dbReference>
<dbReference type="GO" id="GO:0015629">
    <property type="term" value="C:actin cytoskeleton"/>
    <property type="evidence" value="ECO:0000318"/>
    <property type="project" value="GO_Central"/>
</dbReference>
<dbReference type="GO" id="GO:0005737">
    <property type="term" value="C:cytoplasm"/>
    <property type="evidence" value="ECO:0000314"/>
    <property type="project" value="UniProtKB"/>
</dbReference>
<dbReference type="GO" id="GO:0031234">
    <property type="term" value="C:extrinsic component of cytoplasmic side of plasma membrane"/>
    <property type="evidence" value="ECO:0000314"/>
    <property type="project" value="UniProtKB"/>
</dbReference>
<dbReference type="GO" id="GO:0001891">
    <property type="term" value="C:phagocytic cup"/>
    <property type="evidence" value="ECO:0000314"/>
    <property type="project" value="UniProtKB"/>
</dbReference>
<dbReference type="GO" id="GO:0031143">
    <property type="term" value="C:pseudopodium"/>
    <property type="evidence" value="ECO:0000314"/>
    <property type="project" value="UniProtKB"/>
</dbReference>
<dbReference type="GO" id="GO:0051015">
    <property type="term" value="F:actin filament binding"/>
    <property type="evidence" value="ECO:0000318"/>
    <property type="project" value="GO_Central"/>
</dbReference>
<dbReference type="GO" id="GO:0030042">
    <property type="term" value="P:actin filament depolymerization"/>
    <property type="evidence" value="ECO:0000318"/>
    <property type="project" value="GO_Central"/>
</dbReference>
<dbReference type="GO" id="GO:0051014">
    <property type="term" value="P:actin filament severing"/>
    <property type="evidence" value="ECO:0000314"/>
    <property type="project" value="UniProtKB"/>
</dbReference>
<dbReference type="CDD" id="cd11286">
    <property type="entry name" value="ADF_cofilin_like"/>
    <property type="match status" value="1"/>
</dbReference>
<dbReference type="Gene3D" id="3.40.20.10">
    <property type="entry name" value="Severin"/>
    <property type="match status" value="1"/>
</dbReference>
<dbReference type="InterPro" id="IPR002108">
    <property type="entry name" value="ADF-H"/>
</dbReference>
<dbReference type="InterPro" id="IPR029006">
    <property type="entry name" value="ADF-H/Gelsolin-like_dom_sf"/>
</dbReference>
<dbReference type="InterPro" id="IPR017904">
    <property type="entry name" value="ADF/Cofilin"/>
</dbReference>
<dbReference type="PANTHER" id="PTHR11913">
    <property type="entry name" value="COFILIN-RELATED"/>
    <property type="match status" value="1"/>
</dbReference>
<dbReference type="Pfam" id="PF00241">
    <property type="entry name" value="Cofilin_ADF"/>
    <property type="match status" value="1"/>
</dbReference>
<dbReference type="PRINTS" id="PR00006">
    <property type="entry name" value="COFILIN"/>
</dbReference>
<dbReference type="SMART" id="SM00102">
    <property type="entry name" value="ADF"/>
    <property type="match status" value="1"/>
</dbReference>
<dbReference type="SUPFAM" id="SSF55753">
    <property type="entry name" value="Actin depolymerizing proteins"/>
    <property type="match status" value="1"/>
</dbReference>
<dbReference type="PROSITE" id="PS51263">
    <property type="entry name" value="ADF_H"/>
    <property type="match status" value="1"/>
</dbReference>
<reference evidence="5" key="1">
    <citation type="submission" date="2012-06" db="EMBL/GenBank/DDBJ databases">
        <title>Short 5' UTR of Entamoeba genes.</title>
        <authorList>
            <person name="Hiranuka K."/>
            <person name="Kumagai M."/>
            <person name="Wakaguri H."/>
            <person name="Suzuki Y."/>
            <person name="Sugano S."/>
            <person name="Watanabe J."/>
            <person name="Makioka A."/>
        </authorList>
    </citation>
    <scope>NUCLEOTIDE SEQUENCE [MRNA]</scope>
    <source>
        <strain evidence="5">ATCC 30459 / HM-1:IMSS / ABRM</strain>
    </source>
</reference>
<reference evidence="6" key="2">
    <citation type="journal article" date="2005" name="Nature">
        <title>The genome of the protist parasite Entamoeba histolytica.</title>
        <authorList>
            <person name="Loftus B.J."/>
            <person name="Anderson I."/>
            <person name="Davies R."/>
            <person name="Alsmark U.C."/>
            <person name="Samuelson J."/>
            <person name="Amedeo P."/>
            <person name="Roncaglia P."/>
            <person name="Berriman M."/>
            <person name="Hirt R.P."/>
            <person name="Mann B.J."/>
            <person name="Nozaki T."/>
            <person name="Suh B."/>
            <person name="Pop M."/>
            <person name="Duchene M."/>
            <person name="Ackers J."/>
            <person name="Tannich E."/>
            <person name="Leippe M."/>
            <person name="Hofer M."/>
            <person name="Bruchhaus I."/>
            <person name="Willhoeft U."/>
            <person name="Bhattacharya A."/>
            <person name="Chillingworth T."/>
            <person name="Churcher C.M."/>
            <person name="Hance Z."/>
            <person name="Harris B."/>
            <person name="Harris D."/>
            <person name="Jagels K."/>
            <person name="Moule S."/>
            <person name="Mungall K.L."/>
            <person name="Ormond D."/>
            <person name="Squares R."/>
            <person name="Whitehead S."/>
            <person name="Quail M.A."/>
            <person name="Rabbinowitsch E."/>
            <person name="Norbertczak H."/>
            <person name="Price C."/>
            <person name="Wang Z."/>
            <person name="Guillen N."/>
            <person name="Gilchrist C."/>
            <person name="Stroup S.E."/>
            <person name="Bhattacharya S."/>
            <person name="Lohia A."/>
            <person name="Foster P.G."/>
            <person name="Sicheritz-Ponten T."/>
            <person name="Weber C."/>
            <person name="Singh U."/>
            <person name="Mukherjee C."/>
            <person name="El-Sayed N.M.A."/>
            <person name="Petri W.A."/>
            <person name="Clark C.G."/>
            <person name="Embley T.M."/>
            <person name="Barrell B.G."/>
            <person name="Fraser C.M."/>
            <person name="Hall N."/>
        </authorList>
    </citation>
    <scope>NUCLEOTIDE SEQUENCE [LARGE SCALE GENOMIC DNA]</scope>
    <source>
        <strain evidence="6">ATCC 30459 / HM-1:IMSS / ABRM</strain>
    </source>
</reference>
<reference evidence="4" key="3">
    <citation type="journal article" date="2022" name="Front. Cell Dev. Biol.">
        <title>Unravelling the Biology of EhActo as the First Cofilin From Entamoeba histolytica.</title>
        <authorList>
            <person name="Kumar N."/>
            <person name="Rath P.P."/>
            <person name="Aggarwal P."/>
            <person name="Maiti S."/>
            <person name="Bhavesh N.S."/>
            <person name="Gourinath S."/>
        </authorList>
    </citation>
    <scope>STRUCTURE BY NMR</scope>
    <scope>FUNCTION</scope>
    <scope>INTERACTION WITH F-ACTIN AND 14-3-3 PROTEIN 3</scope>
    <scope>SUBCELLULAR LOCATION</scope>
    <scope>DEVELOPMENTAL STAGE</scope>
</reference>
<accession>C4LVG4</accession>
<accession>A0A175JGQ9</accession>
<accession>S0AX17</accession>
<proteinExistence type="evidence at protein level"/>
<sequence>MAGIQLADEVTSVYNDFKLSHKYRYIVFKMNDGMTEVVVEKTAEKNATYDDFLKDLPEKSARYAVYDLEYDTPEGLRQKIIFYLWTPEGCKIREKMLYSATKATIKQALVGLSAEIQATDAGELNLDEVIAKVKTISK</sequence>
<organism>
    <name type="scientific">Entamoeba histolytica (strain ATCC 30459 / HM-1:IMSS / ABRM)</name>
    <dbReference type="NCBI Taxonomy" id="294381"/>
    <lineage>
        <taxon>Eukaryota</taxon>
        <taxon>Amoebozoa</taxon>
        <taxon>Evosea</taxon>
        <taxon>Archamoebae</taxon>
        <taxon>Mastigamoebida</taxon>
        <taxon>Entamoebidae</taxon>
        <taxon>Entamoeba</taxon>
    </lineage>
</organism>
<name>ACTP_ENTH1</name>
<gene>
    <name evidence="3" type="primary">ACTO</name>
    <name evidence="6" type="ORF">EHI_197480</name>
</gene>
<keyword id="KW-0009">Actin-binding</keyword>
<keyword id="KW-1003">Cell membrane</keyword>
<keyword id="KW-0966">Cell projection</keyword>
<keyword id="KW-0963">Cytoplasm</keyword>
<keyword id="KW-0206">Cytoskeleton</keyword>
<keyword id="KW-0472">Membrane</keyword>
<keyword id="KW-1185">Reference proteome</keyword>